<reference key="1">
    <citation type="journal article" date="2001" name="J. Mol. Biol.">
        <title>An expressed sequence tag (EST) data mining strategy succeeding in the discovery of new G-protein coupled receptors.</title>
        <authorList>
            <person name="Wittenberger T."/>
            <person name="Schaller H.C."/>
            <person name="Hellebrand S."/>
        </authorList>
    </citation>
    <scope>NUCLEOTIDE SEQUENCE [MRNA]</scope>
</reference>
<reference key="2">
    <citation type="journal article" date="2005" name="Science">
        <title>The transcriptional landscape of the mammalian genome.</title>
        <authorList>
            <person name="Carninci P."/>
            <person name="Kasukawa T."/>
            <person name="Katayama S."/>
            <person name="Gough J."/>
            <person name="Frith M.C."/>
            <person name="Maeda N."/>
            <person name="Oyama R."/>
            <person name="Ravasi T."/>
            <person name="Lenhard B."/>
            <person name="Wells C."/>
            <person name="Kodzius R."/>
            <person name="Shimokawa K."/>
            <person name="Bajic V.B."/>
            <person name="Brenner S.E."/>
            <person name="Batalov S."/>
            <person name="Forrest A.R."/>
            <person name="Zavolan M."/>
            <person name="Davis M.J."/>
            <person name="Wilming L.G."/>
            <person name="Aidinis V."/>
            <person name="Allen J.E."/>
            <person name="Ambesi-Impiombato A."/>
            <person name="Apweiler R."/>
            <person name="Aturaliya R.N."/>
            <person name="Bailey T.L."/>
            <person name="Bansal M."/>
            <person name="Baxter L."/>
            <person name="Beisel K.W."/>
            <person name="Bersano T."/>
            <person name="Bono H."/>
            <person name="Chalk A.M."/>
            <person name="Chiu K.P."/>
            <person name="Choudhary V."/>
            <person name="Christoffels A."/>
            <person name="Clutterbuck D.R."/>
            <person name="Crowe M.L."/>
            <person name="Dalla E."/>
            <person name="Dalrymple B.P."/>
            <person name="de Bono B."/>
            <person name="Della Gatta G."/>
            <person name="di Bernardo D."/>
            <person name="Down T."/>
            <person name="Engstrom P."/>
            <person name="Fagiolini M."/>
            <person name="Faulkner G."/>
            <person name="Fletcher C.F."/>
            <person name="Fukushima T."/>
            <person name="Furuno M."/>
            <person name="Futaki S."/>
            <person name="Gariboldi M."/>
            <person name="Georgii-Hemming P."/>
            <person name="Gingeras T.R."/>
            <person name="Gojobori T."/>
            <person name="Green R.E."/>
            <person name="Gustincich S."/>
            <person name="Harbers M."/>
            <person name="Hayashi Y."/>
            <person name="Hensch T.K."/>
            <person name="Hirokawa N."/>
            <person name="Hill D."/>
            <person name="Huminiecki L."/>
            <person name="Iacono M."/>
            <person name="Ikeo K."/>
            <person name="Iwama A."/>
            <person name="Ishikawa T."/>
            <person name="Jakt M."/>
            <person name="Kanapin A."/>
            <person name="Katoh M."/>
            <person name="Kawasawa Y."/>
            <person name="Kelso J."/>
            <person name="Kitamura H."/>
            <person name="Kitano H."/>
            <person name="Kollias G."/>
            <person name="Krishnan S.P."/>
            <person name="Kruger A."/>
            <person name="Kummerfeld S.K."/>
            <person name="Kurochkin I.V."/>
            <person name="Lareau L.F."/>
            <person name="Lazarevic D."/>
            <person name="Lipovich L."/>
            <person name="Liu J."/>
            <person name="Liuni S."/>
            <person name="McWilliam S."/>
            <person name="Madan Babu M."/>
            <person name="Madera M."/>
            <person name="Marchionni L."/>
            <person name="Matsuda H."/>
            <person name="Matsuzawa S."/>
            <person name="Miki H."/>
            <person name="Mignone F."/>
            <person name="Miyake S."/>
            <person name="Morris K."/>
            <person name="Mottagui-Tabar S."/>
            <person name="Mulder N."/>
            <person name="Nakano N."/>
            <person name="Nakauchi H."/>
            <person name="Ng P."/>
            <person name="Nilsson R."/>
            <person name="Nishiguchi S."/>
            <person name="Nishikawa S."/>
            <person name="Nori F."/>
            <person name="Ohara O."/>
            <person name="Okazaki Y."/>
            <person name="Orlando V."/>
            <person name="Pang K.C."/>
            <person name="Pavan W.J."/>
            <person name="Pavesi G."/>
            <person name="Pesole G."/>
            <person name="Petrovsky N."/>
            <person name="Piazza S."/>
            <person name="Reed J."/>
            <person name="Reid J.F."/>
            <person name="Ring B.Z."/>
            <person name="Ringwald M."/>
            <person name="Rost B."/>
            <person name="Ruan Y."/>
            <person name="Salzberg S.L."/>
            <person name="Sandelin A."/>
            <person name="Schneider C."/>
            <person name="Schoenbach C."/>
            <person name="Sekiguchi K."/>
            <person name="Semple C.A."/>
            <person name="Seno S."/>
            <person name="Sessa L."/>
            <person name="Sheng Y."/>
            <person name="Shibata Y."/>
            <person name="Shimada H."/>
            <person name="Shimada K."/>
            <person name="Silva D."/>
            <person name="Sinclair B."/>
            <person name="Sperling S."/>
            <person name="Stupka E."/>
            <person name="Sugiura K."/>
            <person name="Sultana R."/>
            <person name="Takenaka Y."/>
            <person name="Taki K."/>
            <person name="Tammoja K."/>
            <person name="Tan S.L."/>
            <person name="Tang S."/>
            <person name="Taylor M.S."/>
            <person name="Tegner J."/>
            <person name="Teichmann S.A."/>
            <person name="Ueda H.R."/>
            <person name="van Nimwegen E."/>
            <person name="Verardo R."/>
            <person name="Wei C.L."/>
            <person name="Yagi K."/>
            <person name="Yamanishi H."/>
            <person name="Zabarovsky E."/>
            <person name="Zhu S."/>
            <person name="Zimmer A."/>
            <person name="Hide W."/>
            <person name="Bult C."/>
            <person name="Grimmond S.M."/>
            <person name="Teasdale R.D."/>
            <person name="Liu E.T."/>
            <person name="Brusic V."/>
            <person name="Quackenbush J."/>
            <person name="Wahlestedt C."/>
            <person name="Mattick J.S."/>
            <person name="Hume D.A."/>
            <person name="Kai C."/>
            <person name="Sasaki D."/>
            <person name="Tomaru Y."/>
            <person name="Fukuda S."/>
            <person name="Kanamori-Katayama M."/>
            <person name="Suzuki M."/>
            <person name="Aoki J."/>
            <person name="Arakawa T."/>
            <person name="Iida J."/>
            <person name="Imamura K."/>
            <person name="Itoh M."/>
            <person name="Kato T."/>
            <person name="Kawaji H."/>
            <person name="Kawagashira N."/>
            <person name="Kawashima T."/>
            <person name="Kojima M."/>
            <person name="Kondo S."/>
            <person name="Konno H."/>
            <person name="Nakano K."/>
            <person name="Ninomiya N."/>
            <person name="Nishio T."/>
            <person name="Okada M."/>
            <person name="Plessy C."/>
            <person name="Shibata K."/>
            <person name="Shiraki T."/>
            <person name="Suzuki S."/>
            <person name="Tagami M."/>
            <person name="Waki K."/>
            <person name="Watahiki A."/>
            <person name="Okamura-Oho Y."/>
            <person name="Suzuki H."/>
            <person name="Kawai J."/>
            <person name="Hayashizaki Y."/>
        </authorList>
    </citation>
    <scope>NUCLEOTIDE SEQUENCE [LARGE SCALE MRNA]</scope>
    <source>
        <strain>C57BL/6J</strain>
        <tissue>Thymus</tissue>
    </source>
</reference>
<reference key="3">
    <citation type="journal article" date="2007" name="Biochem. Biophys. Res. Commun.">
        <title>The orphan GPCR GPR87 was deorphanized and shown to be a lysophosphatidic acid receptor.</title>
        <authorList>
            <person name="Tabata K."/>
            <person name="Baba K."/>
            <person name="Shiraishi A."/>
            <person name="Ito M."/>
            <person name="Fujita N."/>
        </authorList>
    </citation>
    <scope>TISSUE SPECIFICITY</scope>
    <scope>FUNCTION</scope>
</reference>
<reference key="4">
    <citation type="journal article" date="2022" name="Free Radic. Biol. Med.">
        <title>GPR87 promotes renal tubulointerstitial fibrosis by accelerating glycolysis and mitochondrial injury.</title>
        <authorList>
            <person name="Cui X."/>
            <person name="Shi E."/>
            <person name="Li J."/>
            <person name="Li Y."/>
            <person name="Qiao Z."/>
            <person name="Wang Z."/>
            <person name="Liu M."/>
            <person name="Tang W."/>
            <person name="Sun Y."/>
            <person name="Zhang Y."/>
            <person name="Xie Y."/>
            <person name="Zhen J."/>
            <person name="Wang X."/>
            <person name="Yi F."/>
        </authorList>
    </citation>
    <scope>FUNCTION</scope>
    <scope>DISRUPTION PHENOTYPE</scope>
</reference>
<sequence>MGLNLTLTKLPGNELYSQASHTANSTSEGHGKNSTLHNKFDTIILPVLYLVIFVASILLNGLAVWIFFHIRNKTSFIFYLKNIVVADLIMTLTFPFRIVRDAGFGPWYFEFILCRYTSVLFYANMYTSIVFLGLISVDRYLKVVKPFGDSRMYSITFTKVLSVCVWVIMAILSLPNIILTNGQPTKENIHDCMKLKSPLGAKWHMAVTYVDSCLFVAVLVILIGCYIAISRYIHKSSRQFISQSSRKRKHNQSIRVVVAVFFTCFLPYHLCRIPFTFSNLDRLLDESAHKILYYCKEMTLFLSACNVCLDPIIYFFMCKSFSRRLFKKSNIRTRSESIRSLQSVRRSEVRIYYDYTDV</sequence>
<dbReference type="EMBL" id="AF295366">
    <property type="protein sequence ID" value="AAK01866.1"/>
    <property type="molecule type" value="mRNA"/>
</dbReference>
<dbReference type="EMBL" id="AK080394">
    <property type="protein sequence ID" value="BAC37905.1"/>
    <property type="molecule type" value="mRNA"/>
</dbReference>
<dbReference type="CCDS" id="CCDS79914.1"/>
<dbReference type="RefSeq" id="NP_001289132.1">
    <property type="nucleotide sequence ID" value="NM_001302203.1"/>
</dbReference>
<dbReference type="SMR" id="Q99MT7"/>
<dbReference type="FunCoup" id="Q99MT7">
    <property type="interactions" value="35"/>
</dbReference>
<dbReference type="STRING" id="10090.ENSMUSP00000143683"/>
<dbReference type="GlyCosmos" id="Q99MT7">
    <property type="glycosylation" value="3 sites, No reported glycans"/>
</dbReference>
<dbReference type="GlyGen" id="Q99MT7">
    <property type="glycosylation" value="3 sites"/>
</dbReference>
<dbReference type="PhosphoSitePlus" id="Q99MT7"/>
<dbReference type="PaxDb" id="10090-ENSMUSP00000059272"/>
<dbReference type="Antibodypedia" id="18298">
    <property type="antibodies" value="253 antibodies from 29 providers"/>
</dbReference>
<dbReference type="DNASU" id="84111"/>
<dbReference type="Ensembl" id="ENSMUST00000200095.2">
    <property type="protein sequence ID" value="ENSMUSP00000143683.2"/>
    <property type="gene ID" value="ENSMUSG00000051431.8"/>
</dbReference>
<dbReference type="GeneID" id="84111"/>
<dbReference type="KEGG" id="mmu:84111"/>
<dbReference type="UCSC" id="uc008pip.2">
    <property type="organism name" value="mouse"/>
</dbReference>
<dbReference type="AGR" id="MGI:1934133"/>
<dbReference type="CTD" id="53836"/>
<dbReference type="MGI" id="MGI:1934133">
    <property type="gene designation" value="Gpr87"/>
</dbReference>
<dbReference type="VEuPathDB" id="HostDB:ENSMUSG00000051431"/>
<dbReference type="eggNOG" id="KOG3656">
    <property type="taxonomic scope" value="Eukaryota"/>
</dbReference>
<dbReference type="GeneTree" id="ENSGT01110000267255"/>
<dbReference type="HOGENOM" id="CLU_009579_8_2_1"/>
<dbReference type="InParanoid" id="Q99MT7"/>
<dbReference type="OMA" id="VVYINTC"/>
<dbReference type="OrthoDB" id="6163051at2759"/>
<dbReference type="PhylomeDB" id="Q99MT7"/>
<dbReference type="BioGRID-ORCS" id="84111">
    <property type="hits" value="2 hits in 78 CRISPR screens"/>
</dbReference>
<dbReference type="PRO" id="PR:Q99MT7"/>
<dbReference type="Proteomes" id="UP000000589">
    <property type="component" value="Chromosome 3"/>
</dbReference>
<dbReference type="RNAct" id="Q99MT7">
    <property type="molecule type" value="protein"/>
</dbReference>
<dbReference type="Bgee" id="ENSMUSG00000051431">
    <property type="expression patterns" value="Expressed in esophagus and 38 other cell types or tissues"/>
</dbReference>
<dbReference type="ExpressionAtlas" id="Q99MT7">
    <property type="expression patterns" value="baseline and differential"/>
</dbReference>
<dbReference type="GO" id="GO:0005886">
    <property type="term" value="C:plasma membrane"/>
    <property type="evidence" value="ECO:0007669"/>
    <property type="project" value="UniProtKB-SubCell"/>
</dbReference>
<dbReference type="GO" id="GO:0045028">
    <property type="term" value="F:G protein-coupled purinergic nucleotide receptor activity"/>
    <property type="evidence" value="ECO:0007669"/>
    <property type="project" value="Ensembl"/>
</dbReference>
<dbReference type="CDD" id="cd15969">
    <property type="entry name" value="7tmA_GPR87"/>
    <property type="match status" value="1"/>
</dbReference>
<dbReference type="FunFam" id="1.20.1070.10:FF:000049">
    <property type="entry name" value="G-protein coupled receptor 87"/>
    <property type="match status" value="1"/>
</dbReference>
<dbReference type="Gene3D" id="1.20.1070.10">
    <property type="entry name" value="Rhodopsin 7-helix transmembrane proteins"/>
    <property type="match status" value="1"/>
</dbReference>
<dbReference type="InterPro" id="IPR000276">
    <property type="entry name" value="GPCR_Rhodpsn"/>
</dbReference>
<dbReference type="InterPro" id="IPR017452">
    <property type="entry name" value="GPCR_Rhodpsn_7TM"/>
</dbReference>
<dbReference type="InterPro" id="IPR008109">
    <property type="entry name" value="P2Y13_rcpt"/>
</dbReference>
<dbReference type="PANTHER" id="PTHR24233:SF8">
    <property type="entry name" value="G-PROTEIN COUPLED RECEPTOR 87"/>
    <property type="match status" value="1"/>
</dbReference>
<dbReference type="PANTHER" id="PTHR24233">
    <property type="entry name" value="P2Y PURINOCEPTOR-RELATED G-PROTEIN COUPLED RECEPTOR"/>
    <property type="match status" value="1"/>
</dbReference>
<dbReference type="Pfam" id="PF00001">
    <property type="entry name" value="7tm_1"/>
    <property type="match status" value="1"/>
</dbReference>
<dbReference type="PRINTS" id="PR00237">
    <property type="entry name" value="GPCRRHODOPSN"/>
</dbReference>
<dbReference type="PRINTS" id="PR01735">
    <property type="entry name" value="P2Y13PRNCPTR"/>
</dbReference>
<dbReference type="PRINTS" id="PR01157">
    <property type="entry name" value="P2YPURNOCPTR"/>
</dbReference>
<dbReference type="SUPFAM" id="SSF81321">
    <property type="entry name" value="Family A G protein-coupled receptor-like"/>
    <property type="match status" value="1"/>
</dbReference>
<dbReference type="PROSITE" id="PS00237">
    <property type="entry name" value="G_PROTEIN_RECEP_F1_1"/>
    <property type="match status" value="1"/>
</dbReference>
<dbReference type="PROSITE" id="PS50262">
    <property type="entry name" value="G_PROTEIN_RECEP_F1_2"/>
    <property type="match status" value="1"/>
</dbReference>
<gene>
    <name type="primary">Gpr87</name>
</gene>
<proteinExistence type="evidence at transcript level"/>
<protein>
    <recommendedName>
        <fullName>G-protein coupled receptor 87</fullName>
    </recommendedName>
</protein>
<evidence type="ECO:0000250" key="1"/>
<evidence type="ECO:0000250" key="2">
    <source>
        <dbReference type="UniProtKB" id="Q9BY21"/>
    </source>
</evidence>
<evidence type="ECO:0000255" key="3"/>
<evidence type="ECO:0000255" key="4">
    <source>
        <dbReference type="PROSITE-ProRule" id="PRU00521"/>
    </source>
</evidence>
<evidence type="ECO:0000269" key="5">
    <source>
    </source>
</evidence>
<evidence type="ECO:0000269" key="6">
    <source>
    </source>
</evidence>
<evidence type="ECO:0000305" key="7"/>
<name>GPR87_MOUSE</name>
<keyword id="KW-1003">Cell membrane</keyword>
<keyword id="KW-1015">Disulfide bond</keyword>
<keyword id="KW-0297">G-protein coupled receptor</keyword>
<keyword id="KW-0325">Glycoprotein</keyword>
<keyword id="KW-0472">Membrane</keyword>
<keyword id="KW-0675">Receptor</keyword>
<keyword id="KW-1185">Reference proteome</keyword>
<keyword id="KW-0807">Transducer</keyword>
<keyword id="KW-0812">Transmembrane</keyword>
<keyword id="KW-1133">Transmembrane helix</keyword>
<comment type="function">
    <text evidence="2 5">Receptor for lysophosphatidic acid (LPA) (PubMed:17905198). Necessary for p53/TP53-dependent survival in response to DNA damage (By similarity). Promotes the Hippo-YAP signaling pathway and thereby modulates glycolysis and oxidative stress production by the regulation of hexokinase-2/HK2 (By similarity).</text>
</comment>
<comment type="subcellular location">
    <subcellularLocation>
        <location evidence="1">Cell membrane</location>
        <topology evidence="1">Multi-pass membrane protein</topology>
    </subcellularLocation>
</comment>
<comment type="tissue specificity">
    <text evidence="5">Expressed at high levels in testis and brain and to a lesser extent placenta, ovary, prostate, and skeletal muscle but not in heart, lung, kidney, liver or intestine.</text>
</comment>
<comment type="disruption phenotype">
    <text evidence="6">Tubule-specific Gpr87 deletion in mice ameliorates tubulointerstitial fibrosis induced by unilateral ureteral obstruction.</text>
</comment>
<comment type="similarity">
    <text evidence="4">Belongs to the G-protein coupled receptor 1 family.</text>
</comment>
<organism>
    <name type="scientific">Mus musculus</name>
    <name type="common">Mouse</name>
    <dbReference type="NCBI Taxonomy" id="10090"/>
    <lineage>
        <taxon>Eukaryota</taxon>
        <taxon>Metazoa</taxon>
        <taxon>Chordata</taxon>
        <taxon>Craniata</taxon>
        <taxon>Vertebrata</taxon>
        <taxon>Euteleostomi</taxon>
        <taxon>Mammalia</taxon>
        <taxon>Eutheria</taxon>
        <taxon>Euarchontoglires</taxon>
        <taxon>Glires</taxon>
        <taxon>Rodentia</taxon>
        <taxon>Myomorpha</taxon>
        <taxon>Muroidea</taxon>
        <taxon>Muridae</taxon>
        <taxon>Murinae</taxon>
        <taxon>Mus</taxon>
        <taxon>Mus</taxon>
    </lineage>
</organism>
<feature type="chain" id="PRO_0000069596" description="G-protein coupled receptor 87">
    <location>
        <begin position="1"/>
        <end position="358"/>
    </location>
</feature>
<feature type="topological domain" description="Extracellular" evidence="3">
    <location>
        <begin position="1"/>
        <end position="47"/>
    </location>
</feature>
<feature type="transmembrane region" description="Helical; Name=1" evidence="3">
    <location>
        <begin position="48"/>
        <end position="68"/>
    </location>
</feature>
<feature type="topological domain" description="Cytoplasmic" evidence="3">
    <location>
        <begin position="69"/>
        <end position="75"/>
    </location>
</feature>
<feature type="transmembrane region" description="Helical; Name=2" evidence="3">
    <location>
        <begin position="76"/>
        <end position="96"/>
    </location>
</feature>
<feature type="topological domain" description="Extracellular" evidence="3">
    <location>
        <begin position="97"/>
        <end position="116"/>
    </location>
</feature>
<feature type="transmembrane region" description="Helical; Name=3" evidence="3">
    <location>
        <begin position="117"/>
        <end position="137"/>
    </location>
</feature>
<feature type="topological domain" description="Cytoplasmic" evidence="3">
    <location>
        <begin position="138"/>
        <end position="159"/>
    </location>
</feature>
<feature type="transmembrane region" description="Helical; Name=4" evidence="3">
    <location>
        <begin position="160"/>
        <end position="180"/>
    </location>
</feature>
<feature type="topological domain" description="Extracellular" evidence="3">
    <location>
        <begin position="181"/>
        <end position="208"/>
    </location>
</feature>
<feature type="transmembrane region" description="Helical; Name=5" evidence="3">
    <location>
        <begin position="209"/>
        <end position="229"/>
    </location>
</feature>
<feature type="topological domain" description="Cytoplasmic" evidence="3">
    <location>
        <begin position="230"/>
        <end position="256"/>
    </location>
</feature>
<feature type="transmembrane region" description="Helical; Name=6" evidence="3">
    <location>
        <begin position="257"/>
        <end position="277"/>
    </location>
</feature>
<feature type="topological domain" description="Extracellular" evidence="3">
    <location>
        <begin position="278"/>
        <end position="297"/>
    </location>
</feature>
<feature type="transmembrane region" description="Helical; Name=7" evidence="3">
    <location>
        <begin position="298"/>
        <end position="318"/>
    </location>
</feature>
<feature type="topological domain" description="Cytoplasmic" evidence="3">
    <location>
        <begin position="319"/>
        <end position="358"/>
    </location>
</feature>
<feature type="glycosylation site" description="N-linked (GlcNAc...) asparagine" evidence="3">
    <location>
        <position position="4"/>
    </location>
</feature>
<feature type="glycosylation site" description="N-linked (GlcNAc...) asparagine" evidence="3">
    <location>
        <position position="24"/>
    </location>
</feature>
<feature type="glycosylation site" description="N-linked (GlcNAc...) asparagine" evidence="3">
    <location>
        <position position="33"/>
    </location>
</feature>
<feature type="disulfide bond" evidence="4">
    <location>
        <begin position="114"/>
        <end position="192"/>
    </location>
</feature>
<feature type="sequence conflict" description="In Ref. 1." evidence="7" ref="1">
    <original>MGLNLTLTKLP</original>
    <variation>MAVPNVNVSTFA</variation>
    <location>
        <begin position="1"/>
        <end position="11"/>
    </location>
</feature>
<accession>Q99MT7</accession>
<accession>Q8C4Y7</accession>